<protein>
    <recommendedName>
        <fullName evidence="1">Vitelline membrane protein Vm32E</fullName>
    </recommendedName>
</protein>
<proteinExistence type="inferred from homology"/>
<sequence>MHFIALIVAVCVAFAGASCPYSSGGIAAPPCPKNYLFSCQPNLVPAPCAQEAASYGSAGAYAEHIPFYVGYPNHQQVEQYQERIARAALIDGLRGLTQGIQDQQY</sequence>
<organism>
    <name type="scientific">Drosophila ananassae</name>
    <name type="common">Fruit fly</name>
    <dbReference type="NCBI Taxonomy" id="7217"/>
    <lineage>
        <taxon>Eukaryota</taxon>
        <taxon>Metazoa</taxon>
        <taxon>Ecdysozoa</taxon>
        <taxon>Arthropoda</taxon>
        <taxon>Hexapoda</taxon>
        <taxon>Insecta</taxon>
        <taxon>Pterygota</taxon>
        <taxon>Neoptera</taxon>
        <taxon>Endopterygota</taxon>
        <taxon>Diptera</taxon>
        <taxon>Brachycera</taxon>
        <taxon>Muscomorpha</taxon>
        <taxon>Ephydroidea</taxon>
        <taxon>Drosophilidae</taxon>
        <taxon>Drosophila</taxon>
        <taxon>Sophophora</taxon>
    </lineage>
</organism>
<gene>
    <name evidence="1" type="primary">Vm32E</name>
    <name type="ORF">GF15128</name>
</gene>
<comment type="function">
    <text evidence="1">Major early eggshell protein.</text>
</comment>
<comment type="subcellular location">
    <subcellularLocation>
        <location evidence="1">Secreted</location>
    </subcellularLocation>
</comment>
<comment type="similarity">
    <text evidence="4">Belongs to the vitelline membrane family.</text>
</comment>
<reference evidence="5" key="1">
    <citation type="journal article" date="2007" name="Nature">
        <title>Evolution of genes and genomes on the Drosophila phylogeny.</title>
        <authorList>
            <consortium name="Drosophila 12 genomes consortium"/>
        </authorList>
    </citation>
    <scope>NUCLEOTIDE SEQUENCE [LARGE SCALE GENOMIC DNA]</scope>
    <source>
        <strain evidence="5">Tucson 14024-0371.13</strain>
    </source>
</reference>
<name>VTU4_DROAN</name>
<dbReference type="EMBL" id="CH902620">
    <property type="protein sequence ID" value="EDV30985.1"/>
    <property type="molecule type" value="Genomic_DNA"/>
</dbReference>
<dbReference type="FunCoup" id="B3MMW0">
    <property type="interactions" value="2"/>
</dbReference>
<dbReference type="STRING" id="7217.B3MMW0"/>
<dbReference type="EnsemblMetazoa" id="FBtr0119828">
    <property type="protein sequence ID" value="FBpp0118320"/>
    <property type="gene ID" value="FBgn0092153"/>
</dbReference>
<dbReference type="EnsemblMetazoa" id="XM_001961728.3">
    <property type="protein sequence ID" value="XP_001961764.1"/>
    <property type="gene ID" value="LOC6497941"/>
</dbReference>
<dbReference type="GeneID" id="6497941"/>
<dbReference type="KEGG" id="dan:6497941"/>
<dbReference type="CTD" id="34558"/>
<dbReference type="HOGENOM" id="CLU_169196_0_0_1"/>
<dbReference type="InParanoid" id="B3MMW0"/>
<dbReference type="OMA" id="CAQEAQA"/>
<dbReference type="OrthoDB" id="8062718at2759"/>
<dbReference type="PhylomeDB" id="B3MMW0"/>
<dbReference type="Proteomes" id="UP000007801">
    <property type="component" value="Unassembled WGS sequence"/>
</dbReference>
<dbReference type="GO" id="GO:0042600">
    <property type="term" value="C:egg chorion"/>
    <property type="evidence" value="ECO:0007669"/>
    <property type="project" value="EnsemblMetazoa"/>
</dbReference>
<dbReference type="GO" id="GO:0005615">
    <property type="term" value="C:extracellular space"/>
    <property type="evidence" value="ECO:0000250"/>
    <property type="project" value="UniProtKB"/>
</dbReference>
<dbReference type="GO" id="GO:0060388">
    <property type="term" value="C:vitelline envelope"/>
    <property type="evidence" value="ECO:0007669"/>
    <property type="project" value="EnsemblMetazoa"/>
</dbReference>
<dbReference type="GO" id="GO:0008316">
    <property type="term" value="F:structural constituent of vitelline membrane"/>
    <property type="evidence" value="ECO:0000250"/>
    <property type="project" value="UniProtKB"/>
</dbReference>
<dbReference type="GO" id="GO:0007305">
    <property type="term" value="P:vitelline membrane formation involved in chorion-containing eggshell formation"/>
    <property type="evidence" value="ECO:0000250"/>
    <property type="project" value="UniProtKB"/>
</dbReference>
<dbReference type="InterPro" id="IPR013135">
    <property type="entry name" value="Vitelline_membr_Cys-rich-dom"/>
</dbReference>
<dbReference type="Pfam" id="PF10542">
    <property type="entry name" value="Vitelline_membr"/>
    <property type="match status" value="1"/>
</dbReference>
<dbReference type="PROSITE" id="PS51137">
    <property type="entry name" value="VM"/>
    <property type="match status" value="1"/>
</dbReference>
<feature type="signal peptide" evidence="2">
    <location>
        <begin position="1"/>
        <end position="17"/>
    </location>
</feature>
<feature type="chain" id="PRO_0000398793" description="Vitelline membrane protein Vm32E" evidence="2">
    <location>
        <begin position="18"/>
        <end position="105"/>
    </location>
</feature>
<feature type="domain" description="VM" evidence="3">
    <location>
        <begin position="25"/>
        <end position="62"/>
    </location>
</feature>
<keyword id="KW-1185">Reference proteome</keyword>
<keyword id="KW-0964">Secreted</keyword>
<keyword id="KW-0732">Signal</keyword>
<accession>B3MMW0</accession>
<evidence type="ECO:0000250" key="1">
    <source>
        <dbReference type="UniProtKB" id="Q9VKI3"/>
    </source>
</evidence>
<evidence type="ECO:0000255" key="2"/>
<evidence type="ECO:0000255" key="3">
    <source>
        <dbReference type="PROSITE-ProRule" id="PRU00483"/>
    </source>
</evidence>
<evidence type="ECO:0000305" key="4"/>
<evidence type="ECO:0000312" key="5">
    <source>
        <dbReference type="EMBL" id="EDV30985.1"/>
    </source>
</evidence>